<protein>
    <recommendedName>
        <fullName>Putative 8-amino-7-oxononanoate synthase</fullName>
        <shortName>AONS</shortName>
        <ecNumber>2.3.1.47</ecNumber>
    </recommendedName>
    <alternativeName>
        <fullName>7-keto-8-amino-pelargonic acid synthase</fullName>
        <shortName>7-KAP synthase</shortName>
    </alternativeName>
    <alternativeName>
        <fullName>8-amino-7-ketopelargonate synthase</fullName>
    </alternativeName>
</protein>
<keyword id="KW-0093">Biotin biosynthesis</keyword>
<keyword id="KW-0663">Pyridoxal phosphate</keyword>
<keyword id="KW-0808">Transferase</keyword>
<feature type="chain" id="PRO_0000381049" description="Putative 8-amino-7-oxononanoate synthase">
    <location>
        <begin position="1"/>
        <end position="380"/>
    </location>
</feature>
<feature type="binding site" evidence="1">
    <location>
        <position position="18"/>
    </location>
    <ligand>
        <name>substrate</name>
    </ligand>
</feature>
<feature type="binding site" evidence="1">
    <location>
        <begin position="106"/>
        <end position="107"/>
    </location>
    <ligand>
        <name>pyridoxal 5'-phosphate</name>
        <dbReference type="ChEBI" id="CHEBI:597326"/>
    </ligand>
</feature>
<feature type="binding site" evidence="1">
    <location>
        <position position="131"/>
    </location>
    <ligand>
        <name>substrate</name>
    </ligand>
</feature>
<feature type="binding site" evidence="1">
    <location>
        <position position="179"/>
    </location>
    <ligand>
        <name>pyridoxal 5'-phosphate</name>
        <dbReference type="ChEBI" id="CHEBI:597326"/>
    </ligand>
</feature>
<feature type="binding site" evidence="1">
    <location>
        <begin position="205"/>
        <end position="208"/>
    </location>
    <ligand>
        <name>pyridoxal 5'-phosphate</name>
        <dbReference type="ChEBI" id="CHEBI:597326"/>
    </ligand>
</feature>
<feature type="binding site" evidence="1">
    <location>
        <begin position="236"/>
        <end position="239"/>
    </location>
    <ligand>
        <name>pyridoxal 5'-phosphate</name>
        <dbReference type="ChEBI" id="CHEBI:597326"/>
    </ligand>
</feature>
<feature type="binding site" evidence="1">
    <location>
        <position position="352"/>
    </location>
    <ligand>
        <name>substrate</name>
    </ligand>
</feature>
<feature type="modified residue" description="N6-(pyridoxal phosphate)lysine" evidence="1">
    <location>
        <position position="239"/>
    </location>
</feature>
<evidence type="ECO:0000250" key="1"/>
<evidence type="ECO:0000305" key="2"/>
<dbReference type="EC" id="2.3.1.47"/>
<dbReference type="EMBL" id="CP001050">
    <property type="protein sequence ID" value="ACF30398.1"/>
    <property type="molecule type" value="Genomic_DNA"/>
</dbReference>
<dbReference type="RefSeq" id="WP_003689362.1">
    <property type="nucleotide sequence ID" value="NC_011035.1"/>
</dbReference>
<dbReference type="SMR" id="B4RP93"/>
<dbReference type="GeneID" id="66753685"/>
<dbReference type="KEGG" id="ngk:NGK_1753"/>
<dbReference type="HOGENOM" id="CLU_015846_11_2_4"/>
<dbReference type="UniPathway" id="UPA00078"/>
<dbReference type="Proteomes" id="UP000002564">
    <property type="component" value="Chromosome"/>
</dbReference>
<dbReference type="GO" id="GO:0008710">
    <property type="term" value="F:8-amino-7-oxononanoate synthase activity"/>
    <property type="evidence" value="ECO:0007669"/>
    <property type="project" value="UniProtKB-EC"/>
</dbReference>
<dbReference type="GO" id="GO:0030170">
    <property type="term" value="F:pyridoxal phosphate binding"/>
    <property type="evidence" value="ECO:0007669"/>
    <property type="project" value="InterPro"/>
</dbReference>
<dbReference type="GO" id="GO:0009102">
    <property type="term" value="P:biotin biosynthetic process"/>
    <property type="evidence" value="ECO:0007669"/>
    <property type="project" value="UniProtKB-UniPathway"/>
</dbReference>
<dbReference type="CDD" id="cd06454">
    <property type="entry name" value="KBL_like"/>
    <property type="match status" value="1"/>
</dbReference>
<dbReference type="Gene3D" id="3.90.1150.10">
    <property type="entry name" value="Aspartate Aminotransferase, domain 1"/>
    <property type="match status" value="1"/>
</dbReference>
<dbReference type="Gene3D" id="3.40.640.10">
    <property type="entry name" value="Type I PLP-dependent aspartate aminotransferase-like (Major domain)"/>
    <property type="match status" value="1"/>
</dbReference>
<dbReference type="InterPro" id="IPR001917">
    <property type="entry name" value="Aminotrans_II_pyridoxalP_BS"/>
</dbReference>
<dbReference type="InterPro" id="IPR004839">
    <property type="entry name" value="Aminotransferase_I/II_large"/>
</dbReference>
<dbReference type="InterPro" id="IPR050087">
    <property type="entry name" value="AON_synthase_class-II"/>
</dbReference>
<dbReference type="InterPro" id="IPR004723">
    <property type="entry name" value="AONS_Archaea/Proteobacteria"/>
</dbReference>
<dbReference type="InterPro" id="IPR015424">
    <property type="entry name" value="PyrdxlP-dep_Trfase"/>
</dbReference>
<dbReference type="InterPro" id="IPR015421">
    <property type="entry name" value="PyrdxlP-dep_Trfase_major"/>
</dbReference>
<dbReference type="InterPro" id="IPR015422">
    <property type="entry name" value="PyrdxlP-dep_Trfase_small"/>
</dbReference>
<dbReference type="NCBIfam" id="TIGR00858">
    <property type="entry name" value="bioF"/>
    <property type="match status" value="1"/>
</dbReference>
<dbReference type="PANTHER" id="PTHR13693:SF100">
    <property type="entry name" value="8-AMINO-7-OXONONANOATE SYNTHASE"/>
    <property type="match status" value="1"/>
</dbReference>
<dbReference type="PANTHER" id="PTHR13693">
    <property type="entry name" value="CLASS II AMINOTRANSFERASE/8-AMINO-7-OXONONANOATE SYNTHASE"/>
    <property type="match status" value="1"/>
</dbReference>
<dbReference type="Pfam" id="PF00155">
    <property type="entry name" value="Aminotran_1_2"/>
    <property type="match status" value="1"/>
</dbReference>
<dbReference type="SUPFAM" id="SSF53383">
    <property type="entry name" value="PLP-dependent transferases"/>
    <property type="match status" value="1"/>
</dbReference>
<dbReference type="PROSITE" id="PS00599">
    <property type="entry name" value="AA_TRANSFER_CLASS_2"/>
    <property type="match status" value="1"/>
</dbReference>
<accession>B4RP93</accession>
<organism>
    <name type="scientific">Neisseria gonorrhoeae (strain NCCP11945)</name>
    <dbReference type="NCBI Taxonomy" id="521006"/>
    <lineage>
        <taxon>Bacteria</taxon>
        <taxon>Pseudomonadati</taxon>
        <taxon>Pseudomonadota</taxon>
        <taxon>Betaproteobacteria</taxon>
        <taxon>Neisseriales</taxon>
        <taxon>Neisseriaceae</taxon>
        <taxon>Neisseria</taxon>
    </lineage>
</organism>
<reference key="1">
    <citation type="journal article" date="2008" name="J. Bacteriol.">
        <title>Complete genome sequence of Neisseria gonorrhoeae NCCP11945.</title>
        <authorList>
            <person name="Chung G.T."/>
            <person name="Yoo J.S."/>
            <person name="Oh H.B."/>
            <person name="Lee Y.S."/>
            <person name="Cha S.H."/>
            <person name="Kim S.J."/>
            <person name="Yoo C.K."/>
        </authorList>
    </citation>
    <scope>NUCLEOTIDE SEQUENCE [LARGE SCALE GENOMIC DNA]</scope>
    <source>
        <strain>NCCP11945</strain>
    </source>
</reference>
<comment type="function">
    <text evidence="1">Catalyzes the decarboxylative condensation of pimeloyl-[acyl-carrier protein] and L-alanine to produce 8-amino-7-oxononanoate (AON), [acyl-carrier protein], and carbon dioxide.</text>
</comment>
<comment type="catalytic activity">
    <reaction>
        <text>6-carboxyhexanoyl-[ACP] + L-alanine + H(+) = (8S)-8-amino-7-oxononanoate + holo-[ACP] + CO2</text>
        <dbReference type="Rhea" id="RHEA:42288"/>
        <dbReference type="Rhea" id="RHEA-COMP:9685"/>
        <dbReference type="Rhea" id="RHEA-COMP:9955"/>
        <dbReference type="ChEBI" id="CHEBI:15378"/>
        <dbReference type="ChEBI" id="CHEBI:16526"/>
        <dbReference type="ChEBI" id="CHEBI:57972"/>
        <dbReference type="ChEBI" id="CHEBI:64479"/>
        <dbReference type="ChEBI" id="CHEBI:78846"/>
        <dbReference type="ChEBI" id="CHEBI:149468"/>
        <dbReference type="EC" id="2.3.1.47"/>
    </reaction>
</comment>
<comment type="cofactor">
    <cofactor evidence="1">
        <name>pyridoxal 5'-phosphate</name>
        <dbReference type="ChEBI" id="CHEBI:597326"/>
    </cofactor>
</comment>
<comment type="pathway">
    <text>Cofactor biosynthesis; biotin biosynthesis.</text>
</comment>
<comment type="subunit">
    <text evidence="1">Homodimer.</text>
</comment>
<comment type="similarity">
    <text evidence="2">Belongs to the class-II pyridoxal-phosphate-dependent aminotransferase family. BioF subfamily.</text>
</comment>
<gene>
    <name type="primary">bioF</name>
    <name type="ordered locus">NGK_1753</name>
</gene>
<proteinExistence type="inferred from homology"/>
<sequence length="380" mass="43200">MKVFRQQLEQLGAQNQYRSIPDLIHQGRYITRENRKMLNMSSNDYLGLASDENLRRSFLQQYGGNFPSFTSSSSRLLTGNFPIYTDLEELVAQRFQRESALLFNSGYHANLGILPALTTTKSLILADKFVHASMIDGIRLSRCAFFRYRHNDYEHLKNLLEKNVGKFDRTFIVTESVFSMDGDVADLKQLVQLKKQFPNTYLYVDEAHAIGVYGQNGLGIAERDNLIAEIDLLVGTFGKALASVGAYAVCNQVLKECLINQMRPLIFSTALPPFNVAWTYFIFERLPQFSKERSHLEQLSAFLRREVAHRTQIMPSETCIVPYILGGNEATLAKAEYLQGQGYYCLPIRPPTVPKNTSRIRLSLTADMTTDEVRQFAACL</sequence>
<name>BIOF_NEIG2</name>